<name>YHYD_ANACY</name>
<organism>
    <name type="scientific">Anabaena cylindrica</name>
    <dbReference type="NCBI Taxonomy" id="1165"/>
    <lineage>
        <taxon>Bacteria</taxon>
        <taxon>Bacillati</taxon>
        <taxon>Cyanobacteriota</taxon>
        <taxon>Cyanophyceae</taxon>
        <taxon>Nostocales</taxon>
        <taxon>Nostocaceae</taxon>
        <taxon>Anabaena</taxon>
    </lineage>
</organism>
<sequence>MEQLPLPAPIHYELILQLLEKQTMNAVSQNSDLQHQVSQLIVTLRKAASQQKRLEENCQASAVTVDHRWSLNHHGGKVITPD</sequence>
<accession>P16420</accession>
<protein>
    <recommendedName>
        <fullName>Uncharacterized 9.3 kDa protein in soluble hydrogenase 5'region</fullName>
    </recommendedName>
</protein>
<proteinExistence type="predicted"/>
<reference key="1">
    <citation type="journal article" date="1990" name="Eur. J. Biochem.">
        <title>Soluble hydrogenase of Anabaena cylindrica. Cloning and sequencing of a potential gene encoding the tritium exchange subunit.</title>
        <authorList>
            <person name="Ewart G.D."/>
            <person name="Reed K.C."/>
            <person name="Smith G.D."/>
        </authorList>
    </citation>
    <scope>NUCLEOTIDE SEQUENCE [GENOMIC DNA]</scope>
</reference>
<dbReference type="EMBL" id="X17482">
    <property type="protein sequence ID" value="CAA35517.1"/>
    <property type="molecule type" value="Genomic_DNA"/>
</dbReference>
<dbReference type="PIR" id="S07766">
    <property type="entry name" value="S07766"/>
</dbReference>
<dbReference type="SMR" id="P16420"/>
<dbReference type="OMA" id="PIHYELI"/>
<dbReference type="InterPro" id="IPR035228">
    <property type="entry name" value="DUF5340"/>
</dbReference>
<dbReference type="Pfam" id="PF17275">
    <property type="entry name" value="DUF5340"/>
    <property type="match status" value="1"/>
</dbReference>
<feature type="chain" id="PRO_0000066262" description="Uncharacterized 9.3 kDa protein in soluble hydrogenase 5'region">
    <location>
        <begin position="1"/>
        <end position="82"/>
    </location>
</feature>